<proteinExistence type="inferred from homology"/>
<keyword id="KW-0224">Dipeptidase</keyword>
<keyword id="KW-1015">Disulfide bond</keyword>
<keyword id="KW-0325">Glycoprotein</keyword>
<keyword id="KW-0378">Hydrolase</keyword>
<keyword id="KW-0472">Membrane</keyword>
<keyword id="KW-0479">Metal-binding</keyword>
<keyword id="KW-0482">Metalloprotease</keyword>
<keyword id="KW-0645">Protease</keyword>
<keyword id="KW-1185">Reference proteome</keyword>
<keyword id="KW-0812">Transmembrane</keyword>
<keyword id="KW-1133">Transmembrane helix</keyword>
<keyword id="KW-0862">Zinc</keyword>
<accession>B8LWT1</accession>
<feature type="chain" id="PRO_0000411219" description="Putative dipeptidase TSTA_079200">
    <location>
        <begin position="1"/>
        <end position="470"/>
    </location>
</feature>
<feature type="transmembrane region" description="Helical" evidence="2">
    <location>
        <begin position="40"/>
        <end position="60"/>
    </location>
</feature>
<feature type="binding site" evidence="3">
    <location>
        <position position="92"/>
    </location>
    <ligand>
        <name>Zn(2+)</name>
        <dbReference type="ChEBI" id="CHEBI:29105"/>
        <label>1</label>
        <note>catalytic</note>
    </ligand>
</feature>
<feature type="binding site" evidence="3">
    <location>
        <position position="94"/>
    </location>
    <ligand>
        <name>Zn(2+)</name>
        <dbReference type="ChEBI" id="CHEBI:29105"/>
        <label>1</label>
        <note>catalytic</note>
    </ligand>
</feature>
<feature type="binding site" evidence="3">
    <location>
        <position position="208"/>
    </location>
    <ligand>
        <name>Zn(2+)</name>
        <dbReference type="ChEBI" id="CHEBI:29105"/>
        <label>1</label>
        <note>catalytic</note>
    </ligand>
</feature>
<feature type="binding site" evidence="3">
    <location>
        <position position="208"/>
    </location>
    <ligand>
        <name>Zn(2+)</name>
        <dbReference type="ChEBI" id="CHEBI:29105"/>
        <label>2</label>
        <note>catalytic</note>
    </ligand>
</feature>
<feature type="binding site" evidence="3">
    <location>
        <position position="235"/>
    </location>
    <ligand>
        <name>substrate</name>
    </ligand>
</feature>
<feature type="binding site" evidence="3">
    <location>
        <position position="279"/>
    </location>
    <ligand>
        <name>Zn(2+)</name>
        <dbReference type="ChEBI" id="CHEBI:29105"/>
        <label>2</label>
        <note>catalytic</note>
    </ligand>
</feature>
<feature type="binding site" evidence="3">
    <location>
        <position position="300"/>
    </location>
    <ligand>
        <name>Zn(2+)</name>
        <dbReference type="ChEBI" id="CHEBI:29105"/>
        <label>2</label>
        <note>catalytic</note>
    </ligand>
</feature>
<feature type="binding site" evidence="3">
    <location>
        <position position="311"/>
    </location>
    <ligand>
        <name>substrate</name>
    </ligand>
</feature>
<feature type="binding site" evidence="3">
    <location>
        <position position="371"/>
    </location>
    <ligand>
        <name>substrate</name>
    </ligand>
</feature>
<feature type="glycosylation site" description="N-linked (GlcNAc...) asparagine" evidence="2">
    <location>
        <position position="188"/>
    </location>
</feature>
<feature type="disulfide bond" evidence="3">
    <location>
        <begin position="143"/>
        <end position="237"/>
    </location>
</feature>
<name>DPEP2_TALSN</name>
<reference key="1">
    <citation type="journal article" date="2015" name="Genome Announc.">
        <title>Genome sequence of the AIDS-associated pathogen Penicillium marneffei (ATCC18224) and its near taxonomic relative Talaromyces stipitatus (ATCC10500).</title>
        <authorList>
            <person name="Nierman W.C."/>
            <person name="Fedorova-Abrams N.D."/>
            <person name="Andrianopoulos A."/>
        </authorList>
    </citation>
    <scope>NUCLEOTIDE SEQUENCE [LARGE SCALE GENOMIC DNA]</scope>
    <source>
        <strain>ATCC 10500 / CBS 375.48 / QM 6759 / NRRL 1006</strain>
    </source>
</reference>
<gene>
    <name type="ORF">TSTA_079200</name>
</gene>
<comment type="function">
    <text evidence="1">Hydrolyzes a wide range of dipeptides.</text>
</comment>
<comment type="catalytic activity">
    <reaction evidence="3">
        <text>an L-aminoacyl-L-amino acid + H2O = 2 an L-alpha-amino acid</text>
        <dbReference type="Rhea" id="RHEA:48940"/>
        <dbReference type="ChEBI" id="CHEBI:15377"/>
        <dbReference type="ChEBI" id="CHEBI:59869"/>
        <dbReference type="ChEBI" id="CHEBI:77460"/>
        <dbReference type="EC" id="3.4.13.19"/>
    </reaction>
</comment>
<comment type="cofactor">
    <cofactor evidence="3">
        <name>Zn(2+)</name>
        <dbReference type="ChEBI" id="CHEBI:29105"/>
    </cofactor>
</comment>
<comment type="subcellular location">
    <subcellularLocation>
        <location evidence="4">Membrane</location>
        <topology evidence="4">Single-pass membrane protein</topology>
    </subcellularLocation>
</comment>
<comment type="similarity">
    <text evidence="3">Belongs to the metallo-dependent hydrolases superfamily. Peptidase M19 family.</text>
</comment>
<sequence>MATLNTRGNDIALNILSSTTESSQAVVLSRARGSPNSQRAWLFGLGTLGIILASVLLNPFTSTQESPLNIDPTDYAARTKHILSTTPLIDGHNDLPYLIRTELKHQIYNDRFTFNTGLLSNTDRKKLRDGMVGGQFWSAYIHCPKDSETNKDVPLDEATWTLRDTLEQIDITKRFVDEFPDLFQFCSNSSCAREAFANGKIGSFIGIEGAHQIGNSLASLRQLYDLGARYITTTHNCDNVFGTAASTVSAGGEDKGLTLFGEEYVAEMNRLGMMLDLSHVSHETMRDTLRLSEAPVIFSHTGAYALSKTLRFAPDDVLKATAEKGGIIMITFINRFLRPDDPDAATIHDVVDHIWHVAQVAGWDHVGVGSDFDGTPVTPRGLEDVSKYPRLVELLMERGATDDQIRKFAGDNILRVWSEVEKAAERIQVEGRKPNEAIWEGRTWVRSEMSPPIMFRDSIGRRIPSYLGEP</sequence>
<evidence type="ECO:0000250" key="1"/>
<evidence type="ECO:0000255" key="2"/>
<evidence type="ECO:0000255" key="3">
    <source>
        <dbReference type="PROSITE-ProRule" id="PRU10073"/>
    </source>
</evidence>
<evidence type="ECO:0000305" key="4"/>
<protein>
    <recommendedName>
        <fullName>Putative dipeptidase TSTA_079200</fullName>
        <ecNumber evidence="3">3.4.13.19</ecNumber>
    </recommendedName>
</protein>
<organism>
    <name type="scientific">Talaromyces stipitatus (strain ATCC 10500 / CBS 375.48 / QM 6759 / NRRL 1006)</name>
    <name type="common">Penicillium stipitatum</name>
    <dbReference type="NCBI Taxonomy" id="441959"/>
    <lineage>
        <taxon>Eukaryota</taxon>
        <taxon>Fungi</taxon>
        <taxon>Dikarya</taxon>
        <taxon>Ascomycota</taxon>
        <taxon>Pezizomycotina</taxon>
        <taxon>Eurotiomycetes</taxon>
        <taxon>Eurotiomycetidae</taxon>
        <taxon>Eurotiales</taxon>
        <taxon>Trichocomaceae</taxon>
        <taxon>Talaromyces</taxon>
        <taxon>Talaromyces sect. Talaromyces</taxon>
    </lineage>
</organism>
<dbReference type="EC" id="3.4.13.19" evidence="3"/>
<dbReference type="EMBL" id="EQ962652">
    <property type="protein sequence ID" value="EED24564.1"/>
    <property type="molecule type" value="Genomic_DNA"/>
</dbReference>
<dbReference type="RefSeq" id="XP_002341951.1">
    <property type="nucleotide sequence ID" value="XM_002341910.1"/>
</dbReference>
<dbReference type="SMR" id="B8LWT1"/>
<dbReference type="STRING" id="441959.B8LWT1"/>
<dbReference type="GeneID" id="8105978"/>
<dbReference type="VEuPathDB" id="FungiDB:TSTA_079200"/>
<dbReference type="eggNOG" id="KOG4127">
    <property type="taxonomic scope" value="Eukaryota"/>
</dbReference>
<dbReference type="HOGENOM" id="CLU_031404_4_0_1"/>
<dbReference type="InParanoid" id="B8LWT1"/>
<dbReference type="OMA" id="HIWHVAQ"/>
<dbReference type="OrthoDB" id="445695at2759"/>
<dbReference type="PhylomeDB" id="B8LWT1"/>
<dbReference type="Proteomes" id="UP000001745">
    <property type="component" value="Unassembled WGS sequence"/>
</dbReference>
<dbReference type="GO" id="GO:0016020">
    <property type="term" value="C:membrane"/>
    <property type="evidence" value="ECO:0007669"/>
    <property type="project" value="UniProtKB-SubCell"/>
</dbReference>
<dbReference type="GO" id="GO:0046872">
    <property type="term" value="F:metal ion binding"/>
    <property type="evidence" value="ECO:0007669"/>
    <property type="project" value="UniProtKB-KW"/>
</dbReference>
<dbReference type="GO" id="GO:0070573">
    <property type="term" value="F:metallodipeptidase activity"/>
    <property type="evidence" value="ECO:0007669"/>
    <property type="project" value="InterPro"/>
</dbReference>
<dbReference type="GO" id="GO:0006508">
    <property type="term" value="P:proteolysis"/>
    <property type="evidence" value="ECO:0007669"/>
    <property type="project" value="UniProtKB-KW"/>
</dbReference>
<dbReference type="CDD" id="cd01301">
    <property type="entry name" value="rDP_like"/>
    <property type="match status" value="1"/>
</dbReference>
<dbReference type="Gene3D" id="3.20.20.140">
    <property type="entry name" value="Metal-dependent hydrolases"/>
    <property type="match status" value="1"/>
</dbReference>
<dbReference type="InterPro" id="IPR032466">
    <property type="entry name" value="Metal_Hydrolase"/>
</dbReference>
<dbReference type="InterPro" id="IPR008257">
    <property type="entry name" value="Pept_M19"/>
</dbReference>
<dbReference type="PANTHER" id="PTHR10443:SF12">
    <property type="entry name" value="DIPEPTIDASE"/>
    <property type="match status" value="1"/>
</dbReference>
<dbReference type="PANTHER" id="PTHR10443">
    <property type="entry name" value="MICROSOMAL DIPEPTIDASE"/>
    <property type="match status" value="1"/>
</dbReference>
<dbReference type="Pfam" id="PF01244">
    <property type="entry name" value="Peptidase_M19"/>
    <property type="match status" value="1"/>
</dbReference>
<dbReference type="SUPFAM" id="SSF51556">
    <property type="entry name" value="Metallo-dependent hydrolases"/>
    <property type="match status" value="1"/>
</dbReference>
<dbReference type="PROSITE" id="PS51365">
    <property type="entry name" value="RENAL_DIPEPTIDASE_2"/>
    <property type="match status" value="1"/>
</dbReference>